<dbReference type="EC" id="6.1.2.-" evidence="5"/>
<dbReference type="EC" id="2.1.1.-" evidence="5"/>
<dbReference type="EMBL" id="EQ963486">
    <property type="protein sequence ID" value="EED45174.1"/>
    <property type="molecule type" value="Genomic_DNA"/>
</dbReference>
<dbReference type="RefSeq" id="XP_002385303.1">
    <property type="nucleotide sequence ID" value="XM_002385262.1"/>
</dbReference>
<dbReference type="SMR" id="B8NY88"/>
<dbReference type="STRING" id="332952.B8NY88"/>
<dbReference type="ESTHER" id="aspfn-agia">
    <property type="family name" value="Thioesterase"/>
</dbReference>
<dbReference type="EnsemblFungi" id="EED45174">
    <property type="protein sequence ID" value="EED45174"/>
    <property type="gene ID" value="AFLA_010580"/>
</dbReference>
<dbReference type="VEuPathDB" id="FungiDB:AFLA_013349"/>
<dbReference type="eggNOG" id="KOG1176">
    <property type="taxonomic scope" value="Eukaryota"/>
</dbReference>
<dbReference type="eggNOG" id="KOG1178">
    <property type="taxonomic scope" value="Eukaryota"/>
</dbReference>
<dbReference type="eggNOG" id="KOG1256">
    <property type="taxonomic scope" value="Eukaryota"/>
</dbReference>
<dbReference type="HOGENOM" id="CLU_000033_0_0_1"/>
<dbReference type="OMA" id="YGPTETF"/>
<dbReference type="GO" id="GO:0005737">
    <property type="term" value="C:cytoplasm"/>
    <property type="evidence" value="ECO:0007669"/>
    <property type="project" value="TreeGrafter"/>
</dbReference>
<dbReference type="GO" id="GO:0016853">
    <property type="term" value="F:isomerase activity"/>
    <property type="evidence" value="ECO:0007669"/>
    <property type="project" value="UniProtKB-KW"/>
</dbReference>
<dbReference type="GO" id="GO:0016874">
    <property type="term" value="F:ligase activity"/>
    <property type="evidence" value="ECO:0007669"/>
    <property type="project" value="UniProtKB-KW"/>
</dbReference>
<dbReference type="GO" id="GO:0008168">
    <property type="term" value="F:methyltransferase activity"/>
    <property type="evidence" value="ECO:0007669"/>
    <property type="project" value="UniProtKB-KW"/>
</dbReference>
<dbReference type="GO" id="GO:0031177">
    <property type="term" value="F:phosphopantetheine binding"/>
    <property type="evidence" value="ECO:0007669"/>
    <property type="project" value="InterPro"/>
</dbReference>
<dbReference type="GO" id="GO:0043041">
    <property type="term" value="P:amino acid activation for nonribosomal peptide biosynthetic process"/>
    <property type="evidence" value="ECO:0007669"/>
    <property type="project" value="TreeGrafter"/>
</dbReference>
<dbReference type="GO" id="GO:0032259">
    <property type="term" value="P:methylation"/>
    <property type="evidence" value="ECO:0007669"/>
    <property type="project" value="UniProtKB-KW"/>
</dbReference>
<dbReference type="GO" id="GO:0044550">
    <property type="term" value="P:secondary metabolite biosynthetic process"/>
    <property type="evidence" value="ECO:0007669"/>
    <property type="project" value="TreeGrafter"/>
</dbReference>
<dbReference type="CDD" id="cd05930">
    <property type="entry name" value="A_NRPS"/>
    <property type="match status" value="5"/>
</dbReference>
<dbReference type="CDD" id="cd05918">
    <property type="entry name" value="A_NRPS_SidN3_like"/>
    <property type="match status" value="1"/>
</dbReference>
<dbReference type="CDD" id="cd19531">
    <property type="entry name" value="LCL_NRPS-like"/>
    <property type="match status" value="1"/>
</dbReference>
<dbReference type="FunFam" id="3.30.300.30:FF:000084">
    <property type="entry name" value="Enniatin synthase"/>
    <property type="match status" value="1"/>
</dbReference>
<dbReference type="FunFam" id="3.40.50.980:FF:000001">
    <property type="entry name" value="Non-ribosomal peptide synthetase"/>
    <property type="match status" value="1"/>
</dbReference>
<dbReference type="FunFam" id="3.30.300.30:FF:000015">
    <property type="entry name" value="Nonribosomal peptide synthase SidD"/>
    <property type="match status" value="5"/>
</dbReference>
<dbReference type="Gene3D" id="3.30.300.30">
    <property type="match status" value="7"/>
</dbReference>
<dbReference type="Gene3D" id="3.40.50.980">
    <property type="match status" value="2"/>
</dbReference>
<dbReference type="Gene3D" id="1.10.1200.10">
    <property type="entry name" value="ACP-like"/>
    <property type="match status" value="5"/>
</dbReference>
<dbReference type="Gene3D" id="3.40.50.1820">
    <property type="entry name" value="alpha/beta hydrolase"/>
    <property type="match status" value="2"/>
</dbReference>
<dbReference type="Gene3D" id="3.30.559.10">
    <property type="entry name" value="Chloramphenicol acetyltransferase-like domain"/>
    <property type="match status" value="7"/>
</dbReference>
<dbReference type="Gene3D" id="2.30.38.10">
    <property type="entry name" value="Luciferase, Domain 3"/>
    <property type="match status" value="1"/>
</dbReference>
<dbReference type="Gene3D" id="3.40.50.12780">
    <property type="entry name" value="N-terminal domain of ligase-like"/>
    <property type="match status" value="5"/>
</dbReference>
<dbReference type="Gene3D" id="3.30.559.30">
    <property type="entry name" value="Nonribosomal peptide synthetase, condensation domain"/>
    <property type="match status" value="7"/>
</dbReference>
<dbReference type="Gene3D" id="3.40.50.150">
    <property type="entry name" value="Vaccinia Virus protein VP39"/>
    <property type="match status" value="1"/>
</dbReference>
<dbReference type="InterPro" id="IPR010071">
    <property type="entry name" value="AA_adenyl_dom"/>
</dbReference>
<dbReference type="InterPro" id="IPR029058">
    <property type="entry name" value="AB_hydrolase_fold"/>
</dbReference>
<dbReference type="InterPro" id="IPR036736">
    <property type="entry name" value="ACP-like_sf"/>
</dbReference>
<dbReference type="InterPro" id="IPR025110">
    <property type="entry name" value="AMP-bd_C"/>
</dbReference>
<dbReference type="InterPro" id="IPR045851">
    <property type="entry name" value="AMP-bd_C_sf"/>
</dbReference>
<dbReference type="InterPro" id="IPR020845">
    <property type="entry name" value="AMP-binding_CS"/>
</dbReference>
<dbReference type="InterPro" id="IPR000873">
    <property type="entry name" value="AMP-dep_synth/lig_dom"/>
</dbReference>
<dbReference type="InterPro" id="IPR042099">
    <property type="entry name" value="ANL_N_sf"/>
</dbReference>
<dbReference type="InterPro" id="IPR023213">
    <property type="entry name" value="CAT-like_dom_sf"/>
</dbReference>
<dbReference type="InterPro" id="IPR001242">
    <property type="entry name" value="Condensatn"/>
</dbReference>
<dbReference type="InterPro" id="IPR020806">
    <property type="entry name" value="PKS_PP-bd"/>
</dbReference>
<dbReference type="InterPro" id="IPR009081">
    <property type="entry name" value="PP-bd_ACP"/>
</dbReference>
<dbReference type="InterPro" id="IPR006162">
    <property type="entry name" value="Ppantetheine_attach_site"/>
</dbReference>
<dbReference type="InterPro" id="IPR029063">
    <property type="entry name" value="SAM-dependent_MTases_sf"/>
</dbReference>
<dbReference type="InterPro" id="IPR001031">
    <property type="entry name" value="Thioesterase"/>
</dbReference>
<dbReference type="NCBIfam" id="TIGR01733">
    <property type="entry name" value="AA-adenyl-dom"/>
    <property type="match status" value="6"/>
</dbReference>
<dbReference type="NCBIfam" id="NF003417">
    <property type="entry name" value="PRK04813.1"/>
    <property type="match status" value="7"/>
</dbReference>
<dbReference type="PANTHER" id="PTHR45527:SF1">
    <property type="entry name" value="FATTY ACID SYNTHASE"/>
    <property type="match status" value="1"/>
</dbReference>
<dbReference type="PANTHER" id="PTHR45527">
    <property type="entry name" value="NONRIBOSOMAL PEPTIDE SYNTHETASE"/>
    <property type="match status" value="1"/>
</dbReference>
<dbReference type="Pfam" id="PF00501">
    <property type="entry name" value="AMP-binding"/>
    <property type="match status" value="6"/>
</dbReference>
<dbReference type="Pfam" id="PF13193">
    <property type="entry name" value="AMP-binding_C"/>
    <property type="match status" value="3"/>
</dbReference>
<dbReference type="Pfam" id="PF00668">
    <property type="entry name" value="Condensation"/>
    <property type="match status" value="7"/>
</dbReference>
<dbReference type="Pfam" id="PF00550">
    <property type="entry name" value="PP-binding"/>
    <property type="match status" value="6"/>
</dbReference>
<dbReference type="Pfam" id="PF00975">
    <property type="entry name" value="Thioesterase"/>
    <property type="match status" value="1"/>
</dbReference>
<dbReference type="SMART" id="SM00823">
    <property type="entry name" value="PKS_PP"/>
    <property type="match status" value="4"/>
</dbReference>
<dbReference type="SUPFAM" id="SSF56801">
    <property type="entry name" value="Acetyl-CoA synthetase-like"/>
    <property type="match status" value="6"/>
</dbReference>
<dbReference type="SUPFAM" id="SSF47336">
    <property type="entry name" value="ACP-like"/>
    <property type="match status" value="6"/>
</dbReference>
<dbReference type="SUPFAM" id="SSF53474">
    <property type="entry name" value="alpha/beta-Hydrolases"/>
    <property type="match status" value="1"/>
</dbReference>
<dbReference type="SUPFAM" id="SSF52777">
    <property type="entry name" value="CoA-dependent acyltransferases"/>
    <property type="match status" value="14"/>
</dbReference>
<dbReference type="SUPFAM" id="SSF53335">
    <property type="entry name" value="S-adenosyl-L-methionine-dependent methyltransferases"/>
    <property type="match status" value="1"/>
</dbReference>
<dbReference type="PROSITE" id="PS00455">
    <property type="entry name" value="AMP_BINDING"/>
    <property type="match status" value="6"/>
</dbReference>
<dbReference type="PROSITE" id="PS50075">
    <property type="entry name" value="CARRIER"/>
    <property type="match status" value="6"/>
</dbReference>
<dbReference type="PROSITE" id="PS00012">
    <property type="entry name" value="PHOSPHOPANTETHEINE"/>
    <property type="match status" value="3"/>
</dbReference>
<sequence length="7763" mass="858957">MGSIGNVQSPLPRCVQSMHAPSVMQEEMIVSTIADPSHKSYFETYHFSAQGIVDPDQLNGAIHAVARKHAVLRSVFVHPTEFDSTNVQIAVLDQAYTLHRAKLLSLQPIGEEIRFGILPLESIGTDEWDGVMPWKFSLVVCEREQKSYITVRYHHALLDGWSARALLELVQQEMLNPGAVLKGSDFFSLVRQPLKRDWKQDETLLRERLAQIETSPILSPGPVANGDLRVGEVTREVSISSDIWLPDRPAVPARLLRLALGMTISVFRNSDDSLFLEITSARSRLFPKDQQVLGPVLAPQVRNIHLKEHTTLGECMQLLRSSNDPQHNFSVSQLKSFLTESSRDLDVCLVCQTNESYPSNGVGHWEWIKGEARNDLPFILEILPPKEGVFFAKIRYHQNRFEKQFADSFLEFFCQTLTWMQATGNSIDHQTFAAAVSEICRQGDYRQHYLALNPRGVSDDPVNVHDLIEQAASKWPSKIALEAEHNQFMTYAELSNESDRVAKGLRHCLPRDQKDQPLVPICFDKSVDMVVAIVAVLKAGGAYVPLDPSQPRDRLVSILSACHATVVIAGQTDLQDVLHSTCSELSILVTSIENLSEHDKSTDELSGSEHPPPSSLAYVLFTSGSTGTPKGVMVEHRNLVAFMKAGEGNADGTWTSTRLQLAAYSFDASIGDIFANLYRGGRLALVQRNKMLSNLNHWLEEMLITHLALTPTIGDLIISHLPPRLQTLMFGGEPFHQSFLAQAPAEARVWNTCGPTETVVDVACCILQKENPDVPIGRPFGQCQIYILRRGGSNTAVPPNAIGEICVAGPQVSRGYLERPDLTSLGFVTDPFRPSQRMYRTGDLGRLNHRGMLEHLGRADGQIKLRGLRVETGEVEVTIKQSSSIIAQVTVSVNHLEGYDREALVAWIVPEASQGSQDIELAWQEDIMPSCQRRLVPYMIPEVWIMISYLPLTVSGKLNRGTLASWVEHVATGGTHDGLYVITAPWKTQEITQRLPESPAERLLVATCANILGTTLHAVSMDSTFIALGGNSLLAMRLLAALRQEGMNCSLRDLLTPMTLGDVARAMSPSSTPKKQITKAFYHEDSWERIVADSSIAADTIDAIYPCTPQQEGLIQTSLHGDKSAYFATITVHLGDSLNLRTFHAAWNRLVFGCDMLRTAFVSFSEVQHPPVSESNILQVVLSQSAEDVRRLVSLDNRDIAFQFGVVPLSAGISQGSVNEPWRLHLKIHHALYDEAFLSRIVAELCIVYEALEMESSEAALPPSRPFSAFVESLCNDDPEVSKGFWKKYMHEVAPATWPVASGIRRMREENGQDVEMTVVKSWTGNAVALGQKFQATPASIVRAALALALAQYSQTDDVVFGEVSSGRFDHDRFTLGPCLATHPVRIQIDRKSSSGMLKLVTQALESYLATTPYQHCGLASIHRQTADPDLMAFQVLFAHQEAFVEYTAGSRFHVKSAKLRNIGFPLVLESRCDRSTGNLAFECSFDRRYLGDQDVDWFLRSICRTLDMFSAGARDGLSDQKLITGVVDEEMRRAIEKWSTKRTPFGSTFTRNAEICAHELFEMQADMTPQKIALQVNQSEFITYKELNKRCNQLSNALVNWLDSLGLEQSRDQQIVPLCFSNAVDMVIAMIAVLKAGAAYLPIDQNHPQERIQQILSLSGARAMLGDGEAETLEKLQAASKQANSTLITSKRLRTLYGGQTAKKPSFRPTPASLAYVIFTSGSTGKPKGVMVEHGNLAAFMQANEPEAVGTWTSVRLQLATATFDAATGETFGTLGCGGRLILGQTHEILAGLPDWLERTNITHLFVTPRVAANFLTEIHPPYLRTLHIGGEAFDPSILPHMPPGCDVYNVFGPTETTIYATHYKIRKGDGIRRNIPIGYPFGGCRLYILNPETLEQVPIGVIGEICIGGPQVTRGYQGRPELTSRSFLSDPHIVGERMYRSGDLGRLCGDGSIEHHGRIDSQIKLRGLRIEISEIESVCLEHAIATACTVIVLDREDGQVLVAFVQTQKDQQTSTCSQDWAETESILHRHLDSRLPSYMVPSRFVPIEVMPLTTSGKVDRRQLGARAETMDQAGELFTSQHTNHAGSWEQGSIEDKIADAWVQVLGIDRANITPNVAFSRLGGDSIRAIRLLSLLRKAGLKLNMTDVSNASTIFSQAKCATSHTVAAKKSTEDATDIDAHTGPVALGPIAGRYAGIQLKYASQRGEQIIDHFNQSVLLDVTTLCPLRLQQALQRLRNHHDPLRAIVHWSLDIPVEEWTIRILPCSDIKPLVLDSPRTLTLQALREQIQHRITGLDIRRGKVMDAELYRLDGDSRVFLFWTVHHFVVDIVSWQILRDDLNVLVRAKEEPESIALQPATMSFLAWTREGQMKSQDASLATGSIPEEPDILLSSSDSDQLPLWVRQPELVPIHPVNRTTTSASLSPCITALLLGRSNNVLSTEPLDLLLAGLAMTISKHFARAVDRLVVGLETHGRHTGTNTADLSRSIGWFTAIIPMILDCRCESSSIESVVRRVKDQRRLLMENDRGFRHFVASRWSTANARKSEIMPLVFNYQGVRHDPHDHDEMMLHPVQIPGLSWIESSPHAIPLSHAAFELYVHDRQAYIEATWPSDGEMDQEDVATLMGEQITNICQYLAEKDVLGKTSISASSTSAFGLLPDDCFDRVFSLYPEDTLDDIIPCTPMQRALLYEGIADHESRSYVTCRIWRIPTDQAICSQIEGAVKSLIQRHGILRTVFHIDPEVGPLALVLRDTQSPTASAVGHVKVKDHTEMEERVTSLLCNPDYGNPMKQAFYVRIVHAADGSGARLIWLLHHSLIDAWSQDLLLSELTQILVDGCPTKSLIPRPSFGSFARYVTSDSRADHSHGKFWSETLNGVQPKSLPLSLMSSSPINAAAVVVEQACNLAILSENCISPAALVSLAWSLVLSEILDTDDVTHGMLFSGRQLPVDGVADIIGPCISTVPIRTHLNRHGKVLDLLQSTEAAIRLAGSHSTVGVDGVARAAGVEAPALVNTLLNFFGVRTDVLENDGLNSILELDSVDDGLPPSITLSCWQREVDANIMVMRLERRHPLQIGIAQCLVKRMAWYCHTLSHHMDRKLDSVLSITSNEDQLLTKWSQPVDSRPSDSYPCIHDLITGWAAQVPEKVAVQVAESQFVTYGEIEKKSTAIARVIERLVDPRSGSTPPLIPICCDRGVDMVIAILAILKAGAAYVPLNISDPEGRLEAILRQTGSTILVDGLLDKGSRRKLHALGDRTSTTVYTVDGLSILPPSEVSLRKAHSESLAYVLFTSGSTGEPKGVMIEHRNLTSFITTQHNEIIGRWTSCRMPVAAYTFDVSMADLLISLAIGARVALVDSEKMLASMPYWADRTLATTLSMTPTLASLLARSLPPHVAVLMLAGEVFDPNIMKALPRECRVWNGYGPTETFYASFHPVDAQPTHAQVPIGRSFGGNRIYILRPGSNYRQPIGAIGEICIGGTQVARGYLGREDLTSRSFTRDPYNTQTVLYRTGDLGRFTDCGVVEYLGRMDDQIKIRGQRAEPAEIESVVHAASPRVAHAIVDLYQSKRGGGLPRLIAFISTKDPVPPSLCKTFLQEEVEPSCRNQLPGHMMPSTWIYVRTVPLTSSGKADKRMLRSWMARLEEGETVPEASIIELSLSTQMNSETHQDISGGPESPTEIMLRQSCAQLFKVNEDIISLDKSFISSGGDSLLALQLNARLREKGLKCTPRDIVEAQSLAELATILNTSYEAVSPVHMADWTLDLNEMARLPDNGIQGWETIVQRVGIDPGQVRCVMPCTPFQEGVLSSNDESGSSAGYLAHMTVGLGKEIDVEALKYAWQETVDHEDMLRTTFIPADMDMTDIRGLGQGSSLLQVVLYPESPQAGRVKTMKTVSTPATPNAALPSYPSLQGKAQQGHIPVAALVAIGSQDGEGQECTLLITMHHALYDEAYLSLLLKDLSGRYRSIACNEVVPQVPEDQRIPFSTYVRFVHSKLGTAPSTSTAGKFWKSYLADATPSTWPLPHGMQSSITSVKSPETAVLEWTGNLRAAASKVQVTAAAIARAALALTVAEHTNVTDVVLGEVSKGRPDIRGPGDARARFITGPCATTHPVRIRIADEGASKRRTMLQLLRESFTSYMETLPHQFYGLSRIREQSCRVDLLPFQVLFVYQDAFRQKEGLAGDDAFQIQGGNLGQMGFPIVLECSCLSGDSGVVFHCTYAPDVIDKPRIEWFLHHISQSIDALVQVDPARSDSLRSARVPLSAQETRQLELWSRCHAAKDVEKVDDTMPTETSSITHAFDDTARNLHEKRSTSLSMALQRHIVSLDDVGSQQPIIPICFERSTDMVVAILAILKAGAAFVPLEPGYPPERLISIVRTARASLMICGKEDKSNEILVSVCHATNTKLITLEDLKSRPASSDQAVISRYCRDDSRIAYVLFTSGSTGTPKGVVITHRNLLAFMRHNNPDVHGRWYNSRMPVASYTFDVSMADIITTLCCGGRVVLVPVQKLLPSLGAWVDASITSHISLTPTIANMLWEPVKNAEIAFPFLSVLLLAGEVFDAQLMSYVPKECRVWNGYGPTETFYVTFYRVPKAHAKEQTSVSIGYPFGENVIHLLGFESNDHVPVGCIGEICVMGPQVAQGYLGQPELTKQRFKRGVISQAPEGFLYRTGDIGRFHPDGKLEYLGRFDRQIKIRGQRVELAEIEMAIAQHSFVDGCAVVVVNTPTGDSLVGFCVKTSSQTPGKGWDANTAVQIKTWISTRLPAHMVPSYLFPLEGELPRVPSGKVDRQLLAQRATDLLADSLLSSQGQDTYIAPTTEREKVICEIFEETLAQRVSVLDNFLHLGGHSILAIRAVSKINHRLHANLTFKDVFDFATARDLARQLESTATNHRSYTSIPRLTQDKMIVRQSFAQGRLWFLDQLHPGSTWYLMPFGLRIQGDLHLDALEAAVSAIEERHETLRTTFEHRDGENVQVVHPFAHRQLRVVEVPPAVDEEGLLGALKEEQSTPFDLQVHPGWRPLVLRQNKRSHILSIVIHHIICDGWSVAVLLKELSTFYSAALHGKPIHAQLPPLPIQYRDFSAWESQKEQRVEHDRQLKYWIEKLTGSKPAEFICDKRRPQAPSRQAIFEEVRIDGAMYDQLRQYCKQHQLTPFIVLLAVFRATHYRLTREADATIGTPIANRGREELHDIIGLFVNVQCIRLKVDDHHTTFEDLVNQAQSTATEAFAHQDIPFDRIVSALQPDRETTQNPLVQTVFAVHPQTQGKEELEGLLTEQILLSRTTRFDLEFHLFQEEDGLSGQVVFAQDIFFPETVKAMISVFYAVLECGLNQPSISVASMALLNDLSMHDMDDLLSINQTDYPRDATVVDLFRQEARSHPDSIAIVHEGKEVTYGELDRQSDNIERWLRSLHLDRETIVGVLAARSAEAITVFLGIMKADLAYLPLDASTPQTRICSVLSCISERITVIVVDGAQVAVPDVSLAHVDFVALSNLLDDQRHKPSDNQKFESESSISATSLACVLFTSGSTGRPKGVMIEHRAIVRLAKDFNFAKAAGKPLAHMASLSFDVSTWEVFMPLLSGGVVVCVDAMTVLDYKALSDVYARHHVRAAMFTPALFKQCLHDSPSIVKNLDLLILGGDRLDPEDVFQAKQLTQGIILNGYGPTENTGASTIYPIPDEESCVNGVPIGKPIGNSGAYVMDDSLNVVPKGVVGELVVTGDGLARGYTDPEKNEGRFVHVVIGQDTVRAYRTGDYARWRPIDGQLEYFGRRDDQVKIRGNRVEIGEIEHNILSHSAVRSAAVVMNGVGAEADLAAFVTLHPIHDDVAETERVDAWKNVFDTEAYDSFTHQPNRLGRDFVGWLSMYDGCNIDLTEMDEWLDDTLQTLLNGQDPGKVLEIGTGSGMILFNITKGLEEYVGIELVPKLAHMVEQVANADQRLAGRVKVHPGVADRVEDFIPGFIPDLVIINSVAQYFPSAGYLSEIVQKLVRLQGVKSLFFGDIRSYPLYDEFLVSKALHNAGARATQDQIRKCIEESKAAETELLVDPAFFTSLTNQFPDQVAHVEILPKLMNATNELSCYRFSAVVHLKHATAATRIACQVKKADWIDYTARSLNSRSLLEHLRSSHDNTIIAVENIPNRRTILERYIVDALKEGVEPRSMDTKSHWQVRHRNRAAQSSALLPGDLVAIANQAGFQVEISWARQSSQRGAFDAIFHRMGPNSRRQRVLFDFPVDHQCRDVDSFTNHPVQGQQDQQCIFELKESLRAQLPAYMIPRTITILDQLPLTDRGKVDRQALRQRIIKQEPVATESESSAGRVTVEYGSEMERILCDVFAEVLGLQSVDRESSFFSLGGHSLLAPRLASRVSKRLDCTATVRDLFDCPTPVRLADRLLSKQSDSNTEANTSTDGKTQHSALDKVKYHNTLRDWGVQSSEVGHLMPCTPFQEGVLSNSLAVPGDSGYLSVVRLGLQSQLDTKAMRLAWQKVVEREETLRTAFIPVAEDLSSACITSSTFWQCIFNINSREVQRLLCIEGRNSGVDRSALGFGHIPVSLILTDVPTVCKARGVGSTQLELTIHHALYDEAYFRWIIHELSREYHKARLAKDYVPLRAPQTSMNRIPFSIFVSQLQAMPKESATSFWKSYLNGAPAACWPVARGLESGRITEIDEFSSRSLIWKGNMHNLAGARGVTPAAISRAAVALVVAEHSGVEDIVLGEVSSGRSITDGAAGFVAGPCISTHPIRIRMQQRQGSRSSQHRLSFDQLVKQSLNSYLETVPYHQLGLPSIRRQSDAPDLLPFQVLFVYQQAFDFETDSREEASHNFKVQGGHLGRFEFPVVLQASCHPVTGHMSLQCMFDPTVLITEDIEWFLEHISQVLSSIADSSSQPVARLTVGDAEEAALTKLSCAKDQTPELPLGTDSESLCAHDLISRQAMESPCKIAVQYELSQFMTYGELDRESTKLSIVIRAFFDHLSKSVSHEQPLVPISFDKGLDMIVTMLAVLKAGAAYIPLDISHSEQRLRMICQSAQAKLILWDGQNGFDKLRAIGHSSGATISTVDELSDAVDGWGSTPRSGEKPNLSSLAYIIYTSGSTGVPKGVMVNHANLVSFMRSATNETYMSWTANRLQIASYAFDMSVSDIFPVLAVGGRVLLARQQSLWSDLAGWVDAFAVNQLMTTPTVADMMLSSALSDGFLLAHLRDVIVGGEAVKRDILDKAPTEMVFWIQYGPTETTVVVTGCMFRGPTYYQPVPHSQITTIGFPLRGCRVYILQPGTSNRVPIGVPGELCISGPQVTMGYRGGGDPSESPFVPDPFWAGQTMYRSRDIAKVHGDGMIEWVGRMDSQVKLRGLRIDLGEIESAARQLNGVQSCAVVKLALEDKETLLAFIEVAKSHQTHITPVTIQQHIAQNVPSYMVPAHLRLLDKPLPRTASDKLDRKGIHALAQQLVDNGDLLSSCTSRIPPADLRPSPGTLEATLASYWGTILGIDQEVISLETPFSHLGGDSVRAISLLALLRRNNFQLNLTDLGSFSTIRSQAFRILCDVQPQKLPAYMQLTTRSTSRATMVLIHPFFGQSSVFDHVVPALSEQYDIVQVSDPFFGKPDGPASLRDWAAHYLEALHVHLEQDRPVVLVGYSFGGLLVLEMARLLEMTGKGSPFSTVIVDTRCYDPDQPFFKDEEERQTAADDAVRLFGPGQTSMIEEHFDKHAHIWENSVCPDKYLGRSLYLATPEAVESGIVDWWRNQCPHIEVQRVECSHGEIFEPAMTGRVSALINGHCDLDFTRIEP</sequence>
<keyword id="KW-0413">Isomerase</keyword>
<keyword id="KW-0436">Ligase</keyword>
<keyword id="KW-0489">Methyltransferase</keyword>
<keyword id="KW-0511">Multifunctional enzyme</keyword>
<keyword id="KW-0596">Phosphopantetheine</keyword>
<keyword id="KW-0597">Phosphoprotein</keyword>
<keyword id="KW-0677">Repeat</keyword>
<keyword id="KW-0808">Transferase</keyword>
<reference key="1">
    <citation type="journal article" date="2015" name="Genome Announc.">
        <title>Genome sequence of Aspergillus flavus NRRL 3357, a strain that causes aflatoxin contamination of food and feed.</title>
        <authorList>
            <person name="Nierman W.C."/>
            <person name="Yu J."/>
            <person name="Fedorova-Abrams N.D."/>
            <person name="Losada L."/>
            <person name="Cleveland T.E."/>
            <person name="Bhatnagar D."/>
            <person name="Bennett J.W."/>
            <person name="Dean R."/>
            <person name="Payne G.A."/>
        </authorList>
    </citation>
    <scope>NUCLEOTIDE SEQUENCE [LARGE SCALE GENOMIC DNA]</scope>
    <source>
        <strain>ATCC 200026 / FGSC A1120 / IAM 13836 / NRRL 3357 / JCM 12722 / SRRC 167</strain>
    </source>
</reference>
<reference key="2">
    <citation type="journal article" date="2015" name="J. Nat. Prod.">
        <title>Isolation of a Cyclic Depsipetide, Aspergillicin F, and Synthesis of Aspergillicins with Innate Immune-Modulating Activity.</title>
        <authorList>
            <person name="Kikuchi H."/>
            <person name="Hoshikawa T."/>
            <person name="Fujimura S."/>
            <person name="Sakata N."/>
            <person name="Kurata S."/>
            <person name="Katou Y."/>
            <person name="Oshima Y."/>
        </authorList>
    </citation>
    <scope>BIOTECHNOLOGY</scope>
</reference>
<reference key="3">
    <citation type="journal article" date="2019" name="ACS Chem. Biol.">
        <title>Depsipeptide Aspergillicins Revealed by Chromatin Reader Protein Deletion.</title>
        <authorList>
            <person name="Greco C."/>
            <person name="Pfannenstiel B.T."/>
            <person name="Liu J.C."/>
            <person name="Keller N.P."/>
        </authorList>
    </citation>
    <scope>FUNCTION</scope>
    <scope>DISRUPTION PHENOTYPE</scope>
    <scope>CATALYTIC ACTIVITY</scope>
    <scope>INDUCTION</scope>
</reference>
<gene>
    <name evidence="6" type="primary">agiA</name>
    <name type="ORF">AFLA_010580</name>
</gene>
<name>AGIA_ASPFN</name>
<organism>
    <name type="scientific">Aspergillus flavus (strain ATCC 200026 / FGSC A1120 / IAM 13836 / NRRL 3357 / JCM 12722 / SRRC 167)</name>
    <dbReference type="NCBI Taxonomy" id="332952"/>
    <lineage>
        <taxon>Eukaryota</taxon>
        <taxon>Fungi</taxon>
        <taxon>Dikarya</taxon>
        <taxon>Ascomycota</taxon>
        <taxon>Pezizomycotina</taxon>
        <taxon>Eurotiomycetes</taxon>
        <taxon>Eurotiomycetidae</taxon>
        <taxon>Eurotiales</taxon>
        <taxon>Aspergillaceae</taxon>
        <taxon>Aspergillus</taxon>
        <taxon>Aspergillus subgen. Circumdati</taxon>
    </lineage>
</organism>
<protein>
    <recommendedName>
        <fullName evidence="6">Nonribosomal peptide synthetase agiA</fullName>
        <shortName evidence="6">NRPS agiA</shortName>
    </recommendedName>
    <alternativeName>
        <fullName evidence="6">Aspergillicins biosynthesis cluster protein A</fullName>
    </alternativeName>
    <domain>
        <recommendedName>
            <fullName evidence="6">Nonribosomal peptide synthetase</fullName>
            <ecNumber evidence="5">6.1.2.-</ecNumber>
        </recommendedName>
    </domain>
    <domain>
        <recommendedName>
            <fullName evidence="6">S-adenosyl-L-methionine-dependent N-methyltransferase</fullName>
            <ecNumber evidence="5">2.1.1.-</ecNumber>
        </recommendedName>
    </domain>
</protein>
<accession>B8NY88</accession>
<evidence type="ECO:0000255" key="1"/>
<evidence type="ECO:0000255" key="2">
    <source>
        <dbReference type="PROSITE-ProRule" id="PRU00258"/>
    </source>
</evidence>
<evidence type="ECO:0000256" key="3">
    <source>
        <dbReference type="SAM" id="MobiDB-lite"/>
    </source>
</evidence>
<evidence type="ECO:0000269" key="4">
    <source>
    </source>
</evidence>
<evidence type="ECO:0000269" key="5">
    <source>
    </source>
</evidence>
<evidence type="ECO:0000303" key="6">
    <source>
    </source>
</evidence>
<evidence type="ECO:0000305" key="7"/>
<evidence type="ECO:0000305" key="8">
    <source>
    </source>
</evidence>
<proteinExistence type="evidence at protein level"/>
<comment type="function">
    <text evidence="4 5">Nonribosomal peptide synthetase; part of the gene cluster that mediates the biosynthesis of the aspergillicins A and F, 2 cryptic cyclic hexa-depsipeptides (PubMed:31117395). The hexamodular NRPS agiA catalyzes the condensation of the six amino acid residues including N-Me-L-O-Me-tyrosine, L-proline 1, L-proline 2, D-isoleucine, O-acetyl-threonine, and L-isoleucine (PubMed:31117395). The starting condensation domain (C1) of agiA probably loads acetyl-CoA which is condensed on the N-terminus of threonine by the first module to yield O-acetyl-threonine (PubMed:26273902). The second module then loads L-isoleucine. The epimerase (E) domain on module 2 is probably involved in the formation of the D-isoleucine moiety (PubMed:26273902). Modules 3 and 4 further load 2 successive L-prolines (PubMed:26273902). Module 5 is then involved in the condensation of O-Me-L-tyrosine produced by the O-methyltransferase agiB and the N-methyl transferase (NMeT) domain on module 5 probably catalyzes the N-methylation to yield the N-Me-L-O-Me-tyrosine moiety (PubMed:26273902). The A domain of module 5 loads preferentially O-Me-L-tyrosine, but it can also accept L-phenylalanine, which leads to the production of aspergillicin G (PubMed:26273902). Module 6 then loads the last residue, L-isoleucine (PubMed:26273902). The C-terminal thiolesterase (TE) domain probably cyclizes the peptide using the hydroxy group from threonine to form the cyclic depsipeptide (PubMed:26273902).</text>
</comment>
<comment type="domain">
    <text evidence="8">NRP synthetases are composed of discrete domains (adenylation (A), thiolation (T) or peptidyl carrier protein (PCP) and condensation (C) domains) which when grouped together are referred to as a single module. Each module is responsible for the recognition (via the A domain) and incorporation of a single amino acid into the growing peptide product. Thus, an NRP synthetase is generally composed of one or more modules and can terminate in a thioesterase domain (TE) that releases the newly synthesized peptide from the enzyme. Occasionally, additional domains such as epimerase (E) or methyltransferase (MeT) required for further modifications are also present. Aspergillicins synthetase has the C1-A1-T1-C2-A2-T2-E-C3-A3-T3-C4-A4-T4-C5-A5-T5-NMeT-C6-A6-T6-TE domain organization. The epimerase (E) domain on module 2 is probably involved in the formation of the D-isoleucine moiety and the N-methyl transferase (NMeT) domain on module 5 catalyzes the N-methylation of phenylalanine/tyrosine. The C-terminal thiolesterase (TE) domain probably cyclizes the peptide when releasing the final product from the enzyme.</text>
</comment>
<comment type="disruption phenotype">
    <text evidence="5">Impairs the production of aspergillicins A and F.</text>
</comment>
<comment type="biotechnology">
    <text evidence="5">Aspergillicins show innate immunity-modulating activity. Innate immunity is a good pharmaceutical target for the development of immune regulators to suppress unwanted immune responses, such as septic shock, inflammatory diseases, and autoimmune diseases. The innate immune system also provides targets for the development of agents that stimulate protective immune responses toward some diseases, such as infections with pathogenic organisms and cancer.</text>
</comment>
<comment type="similarity">
    <text evidence="7">Belongs to the NRP synthetase family.</text>
</comment>
<feature type="chain" id="PRO_0000448728" description="Nonribosomal peptide synthetase agiA">
    <location>
        <begin position="1"/>
        <end position="7763"/>
    </location>
</feature>
<feature type="domain" description="Carrier 1" evidence="2">
    <location>
        <begin position="995"/>
        <end position="1071"/>
    </location>
</feature>
<feature type="domain" description="Carrier 2" evidence="2">
    <location>
        <begin position="2090"/>
        <end position="2166"/>
    </location>
</feature>
<feature type="domain" description="Carrier 3" evidence="2">
    <location>
        <begin position="3667"/>
        <end position="3743"/>
    </location>
</feature>
<feature type="domain" description="Carrier 4" evidence="2">
    <location>
        <begin position="4806"/>
        <end position="4880"/>
    </location>
</feature>
<feature type="domain" description="Carrier 5" evidence="2">
    <location>
        <begin position="6306"/>
        <end position="6381"/>
    </location>
</feature>
<feature type="domain" description="Carrier 6" evidence="2">
    <location>
        <begin position="7446"/>
        <end position="7522"/>
    </location>
</feature>
<feature type="region of interest" description="Condensation 1" evidence="1 8">
    <location>
        <begin position="20"/>
        <end position="168"/>
    </location>
</feature>
<feature type="region of interest" description="Adenylation 1" evidence="1 8">
    <location>
        <begin position="469"/>
        <end position="866"/>
    </location>
</feature>
<feature type="region of interest" description="Condensation 2" evidence="1 8">
    <location>
        <begin position="1104"/>
        <end position="1526"/>
    </location>
</feature>
<feature type="region of interest" description="Adenylation 2" evidence="1 8">
    <location>
        <begin position="1562"/>
        <end position="1968"/>
    </location>
</feature>
<feature type="region of interest" description="Epimerase (E)" evidence="1 8">
    <location>
        <begin position="2212"/>
        <end position="2556"/>
    </location>
</feature>
<feature type="region of interest" description="Condensation 3" evidence="1 8">
    <location>
        <begin position="2676"/>
        <end position="3016"/>
    </location>
</feature>
<feature type="region of interest" description="Adenylation 3" evidence="1 8">
    <location>
        <begin position="3136"/>
        <end position="3531"/>
    </location>
</feature>
<feature type="region of interest" description="Condensation 4" evidence="1 8">
    <location>
        <begin position="3789"/>
        <end position="4238"/>
    </location>
</feature>
<feature type="region of interest" description="Adenylation 4" evidence="1 8">
    <location>
        <begin position="4321"/>
        <end position="4687"/>
    </location>
</feature>
<feature type="region of interest" description="Condensation 5" evidence="1 8">
    <location>
        <begin position="4902"/>
        <end position="5339"/>
    </location>
</feature>
<feature type="region of interest" description="Adenylation 5" evidence="1 8">
    <location>
        <begin position="5361"/>
        <end position="5765"/>
    </location>
</feature>
<feature type="region of interest" description="S-adenosyl-L-methionine-dependent N-methyltransferase" evidence="1 8">
    <location>
        <begin position="5820"/>
        <end position="5975"/>
    </location>
</feature>
<feature type="region of interest" description="Disordered" evidence="3">
    <location>
        <begin position="6378"/>
        <end position="6399"/>
    </location>
</feature>
<feature type="region of interest" description="Condensation 6" evidence="1 8">
    <location>
        <begin position="6424"/>
        <end position="6883"/>
    </location>
</feature>
<feature type="region of interest" description="Adenylation 6" evidence="1 8">
    <location>
        <begin position="6913"/>
        <end position="7327"/>
    </location>
</feature>
<feature type="region of interest" description="Thioesterase (TE)" evidence="1 8">
    <location>
        <begin position="7542"/>
        <end position="7638"/>
    </location>
</feature>
<feature type="compositionally biased region" description="Polar residues" evidence="3">
    <location>
        <begin position="6379"/>
        <end position="6399"/>
    </location>
</feature>
<feature type="modified residue" description="O-(pantetheine 4'-phosphoryl)serine" evidence="2">
    <location>
        <position position="1032"/>
    </location>
</feature>
<feature type="modified residue" description="O-(pantetheine 4'-phosphoryl)serine" evidence="2">
    <location>
        <position position="2127"/>
    </location>
</feature>
<feature type="modified residue" description="O-(pantetheine 4'-phosphoryl)serine" evidence="2">
    <location>
        <position position="3704"/>
    </location>
</feature>
<feature type="modified residue" description="O-(pantetheine 4'-phosphoryl)serine" evidence="2">
    <location>
        <position position="4840"/>
    </location>
</feature>
<feature type="modified residue" description="O-(pantetheine 4'-phosphoryl)serine" evidence="2">
    <location>
        <position position="6341"/>
    </location>
</feature>
<feature type="modified residue" description="O-(pantetheine 4'-phosphoryl)serine" evidence="2">
    <location>
        <position position="7483"/>
    </location>
</feature>